<dbReference type="EMBL" id="CP001078">
    <property type="protein sequence ID" value="ACD52853.1"/>
    <property type="molecule type" value="Genomic_DNA"/>
</dbReference>
<dbReference type="RefSeq" id="WP_012450900.1">
    <property type="nucleotide sequence ID" value="NC_010723.1"/>
</dbReference>
<dbReference type="SMR" id="B2UY48"/>
<dbReference type="KEGG" id="cbt:CLH_2838"/>
<dbReference type="HOGENOM" id="CLU_049702_2_0_9"/>
<dbReference type="HAMAP" id="MF_01232">
    <property type="entry name" value="UPF0229"/>
    <property type="match status" value="1"/>
</dbReference>
<dbReference type="InterPro" id="IPR014230">
    <property type="entry name" value="Spore_YhbH"/>
</dbReference>
<dbReference type="InterPro" id="IPR006698">
    <property type="entry name" value="UPF0229"/>
</dbReference>
<dbReference type="InterPro" id="IPR036465">
    <property type="entry name" value="vWFA_dom_sf"/>
</dbReference>
<dbReference type="NCBIfam" id="TIGR02877">
    <property type="entry name" value="spore_yhbH"/>
    <property type="match status" value="1"/>
</dbReference>
<dbReference type="PANTHER" id="PTHR30510">
    <property type="entry name" value="UPF0229 PROTEIN YEAH"/>
    <property type="match status" value="1"/>
</dbReference>
<dbReference type="PANTHER" id="PTHR30510:SF2">
    <property type="entry name" value="UPF0229 PROTEIN YEAH"/>
    <property type="match status" value="1"/>
</dbReference>
<dbReference type="Pfam" id="PF04285">
    <property type="entry name" value="DUF444"/>
    <property type="match status" value="2"/>
</dbReference>
<dbReference type="SUPFAM" id="SSF53300">
    <property type="entry name" value="vWA-like"/>
    <property type="match status" value="1"/>
</dbReference>
<protein>
    <recommendedName>
        <fullName evidence="1">UPF0229 protein CLH_2838</fullName>
    </recommendedName>
</protein>
<evidence type="ECO:0000255" key="1">
    <source>
        <dbReference type="HAMAP-Rule" id="MF_01232"/>
    </source>
</evidence>
<evidence type="ECO:0000256" key="2">
    <source>
        <dbReference type="SAM" id="MobiDB-lite"/>
    </source>
</evidence>
<proteinExistence type="inferred from homology"/>
<comment type="similarity">
    <text evidence="1">Belongs to the UPF0229 family.</text>
</comment>
<accession>B2UY48</accession>
<feature type="chain" id="PRO_1000139637" description="UPF0229 protein CLH_2838">
    <location>
        <begin position="1"/>
        <end position="391"/>
    </location>
</feature>
<feature type="region of interest" description="Disordered" evidence="2">
    <location>
        <begin position="1"/>
        <end position="23"/>
    </location>
</feature>
<feature type="region of interest" description="Disordered" evidence="2">
    <location>
        <begin position="75"/>
        <end position="107"/>
    </location>
</feature>
<feature type="compositionally biased region" description="Basic and acidic residues" evidence="2">
    <location>
        <begin position="80"/>
        <end position="92"/>
    </location>
</feature>
<gene>
    <name type="ordered locus">CLH_2838</name>
</gene>
<reference key="1">
    <citation type="submission" date="2008-05" db="EMBL/GenBank/DDBJ databases">
        <title>Complete genome sequence of Clostridium botulinum E3 str. Alaska E43.</title>
        <authorList>
            <person name="Brinkac L.M."/>
            <person name="Brown J.L."/>
            <person name="Bruce D."/>
            <person name="Detter C."/>
            <person name="Munk C."/>
            <person name="Smith L.A."/>
            <person name="Smith T.J."/>
            <person name="Sutton G."/>
            <person name="Brettin T.S."/>
        </authorList>
    </citation>
    <scope>NUCLEOTIDE SEQUENCE [LARGE SCALE GENOMIC DNA]</scope>
    <source>
        <strain>Alaska E43 / Type E3</strain>
    </source>
</reference>
<name>Y2838_CLOBA</name>
<sequence>MAIFRDRTDKQVDHDRAIEDKRRHRQLVEKSIKENLGDILSEESIVGQSKNKKFKIPIKSIKEYQFVYGKNSKGVATGTGEEKRGDKIESGSKKAMGKGNKGAGNEEGDEVYETEITLDELMEYISDELNLPNLDEKKYSEIITDSCGKKKGYQRHGIRPRLAKKRTVMAKISRKQSKKRALIEEGKDYKTERFPFREEDLRYYKVKMQPKKASNAVMIFIMDASGSMDSTKKYLARSYFFVLSRFLKRKYNNIAFEFIYHTTVAKRVSEYEFFHKSESGGTYISSGIVEAINLIDEKYPPSEWNIYPVYASDGDNWSEDNIKAIESVKEICKISNMFGYAELLPSTYTQTMYYKFNKEINEKNFISVVIKEKKDLWEALKTMLKQELKED</sequence>
<organism>
    <name type="scientific">Clostridium botulinum (strain Alaska E43 / Type E3)</name>
    <dbReference type="NCBI Taxonomy" id="508767"/>
    <lineage>
        <taxon>Bacteria</taxon>
        <taxon>Bacillati</taxon>
        <taxon>Bacillota</taxon>
        <taxon>Clostridia</taxon>
        <taxon>Eubacteriales</taxon>
        <taxon>Clostridiaceae</taxon>
        <taxon>Clostridium</taxon>
    </lineage>
</organism>